<feature type="signal peptide" evidence="1">
    <location>
        <begin position="1"/>
        <end position="33"/>
    </location>
</feature>
<feature type="chain" id="PRO_0000025557" description="Quinoprotein glucose dehydrogenase A">
    <location>
        <begin position="34"/>
        <end position="801"/>
    </location>
</feature>
<feature type="transmembrane region" description="Helical" evidence="1">
    <location>
        <begin position="39"/>
        <end position="55"/>
    </location>
</feature>
<feature type="transmembrane region" description="Helical" evidence="1">
    <location>
        <begin position="59"/>
        <end position="79"/>
    </location>
</feature>
<feature type="transmembrane region" description="Helical" evidence="1">
    <location>
        <begin position="94"/>
        <end position="108"/>
    </location>
</feature>
<feature type="transmembrane region" description="Helical" evidence="1">
    <location>
        <begin position="119"/>
        <end position="138"/>
    </location>
</feature>
<feature type="active site" description="Proton acceptor" evidence="1">
    <location>
        <position position="471"/>
    </location>
</feature>
<accession>P05465</accession>
<organism>
    <name type="scientific">Acinetobacter calcoaceticus</name>
    <dbReference type="NCBI Taxonomy" id="471"/>
    <lineage>
        <taxon>Bacteria</taxon>
        <taxon>Pseudomonadati</taxon>
        <taxon>Pseudomonadota</taxon>
        <taxon>Gammaproteobacteria</taxon>
        <taxon>Moraxellales</taxon>
        <taxon>Moraxellaceae</taxon>
        <taxon>Acinetobacter</taxon>
        <taxon>Acinetobacter calcoaceticus/baumannii complex</taxon>
    </lineage>
</organism>
<name>DHGA_ACICA</name>
<comment type="function">
    <text>Catalyzes an exceptionally high rate of oxidation of a wide range of aldose sugars, including D-glucose, galactose, arabinose and xylose, and also the disaccharides lactose, cellobiose and maltose.</text>
</comment>
<comment type="catalytic activity">
    <reaction>
        <text>D-glucose + A = D-glucono-1,5-lactone + AH2</text>
        <dbReference type="Rhea" id="RHEA:24540"/>
        <dbReference type="ChEBI" id="CHEBI:4167"/>
        <dbReference type="ChEBI" id="CHEBI:13193"/>
        <dbReference type="ChEBI" id="CHEBI:16217"/>
        <dbReference type="ChEBI" id="CHEBI:17499"/>
        <dbReference type="EC" id="1.1.99.35"/>
    </reaction>
</comment>
<comment type="cofactor">
    <cofactor>
        <name>pyrroloquinoline quinone</name>
        <dbReference type="ChEBI" id="CHEBI:58442"/>
    </cofactor>
</comment>
<comment type="subunit">
    <text>Monomer.</text>
</comment>
<comment type="subcellular location">
    <subcellularLocation>
        <location>Cell inner membrane</location>
        <topology>Multi-pass membrane protein</topology>
        <orientation>Periplasmic side</orientation>
    </subcellularLocation>
</comment>
<comment type="miscellaneous">
    <text>Acinetobacter calcoaceticus contains two different PQQ dependent enzymes with GDH activity. GDH-A prefers 2-deoxyglucose as substrate, the specific substrates for GDH-B are disaccharides.</text>
</comment>
<comment type="similarity">
    <text evidence="2">Belongs to the bacterial PQQ dehydrogenase family.</text>
</comment>
<sequence>MNQPTSRSGLTTFTVIIIGLLALFLLIGGIWLATLGGSIYYIIAGVLLLIVAWQLYKRASTALWFYAALMLGTIIWSVWEVGTDFWALAPRLDILGILGLWLLVPAVTRGINNLGSSKVALSSTLAIAIVLMVYSIFNDPQEINGEIKTPQPETAQAVPGVAESDWPAYGRTQAGVRYSPLKQINDQNVKDLKVAWTLRTGDLKTDNDSGETTNQVTPIKIGNNMFICTAHQQLIAIDPATGKEKWRFDPKLKTDKSFQHLTCRGVMYYDANNTTEFATSLQSKKSSSTQCPRKVFVPVNDGRLVAVNADTGKACTDFGQNGQVNLQEFMPYAYPGGYNPTSPGIVTGSTVVIAGSVTDNYSNKEPSGVIRGYDVNTGKLLWVFDTGAADPNAMPGEGTTFVHNSPNAWAPLAYDAKLDIVYVPTGVGTPDIWGGDRTELKERYANSMLAINASTGKLVWNFQTTHHDLWDMDVPSQPSLADIKNKAGQTVPAIYVLTKTGNAFVLDRRNGQPIVPVTEKPVPQTVKRGPQTKGEFYSKTQPFSDLNLAPQDKLTDKDMWGATMLDQLMCRVSFKRLNYDGIYTPPSENGTLVFPGNLGVFEWGGMSVNPDRQVAVMNPIGLPFVSRLIPADPNRAQTAKGAGTEQGVQPMYGVPYGVEISAFLSPLGLPCKQPAWGYVAGVDLKTHEVVWKKRIGTIRDSLPNLFQLPAVKIGVPGLGGSISTAGNVMFVGATQDNYLRAFNVTNGKKLWEARLPAGGQATPMTYEINGKQYVVIMAGGHGSFGTKMGDYLVAYALPDNK</sequence>
<proteinExistence type="inferred from homology"/>
<evidence type="ECO:0000255" key="1"/>
<evidence type="ECO:0000305" key="2"/>
<reference key="1">
    <citation type="journal article" date="1988" name="Nucleic Acids Res.">
        <title>Nucleotide sequence of the gene coding for quinoprotein glucose dehydrogenase from Acinetobacter calcoaceticus.</title>
        <authorList>
            <person name="Cleton-Jansen A.-M."/>
            <person name="Goosen N."/>
            <person name="Odle G."/>
            <person name="van de Putte P."/>
        </authorList>
    </citation>
    <scope>NUCLEOTIDE SEQUENCE [GENOMIC DNA]</scope>
    <source>
        <strain>LMD 79.41</strain>
    </source>
</reference>
<dbReference type="EC" id="1.1.99.35"/>
<dbReference type="EMBL" id="X07235">
    <property type="protein sequence ID" value="CAA30222.1"/>
    <property type="molecule type" value="Genomic_DNA"/>
</dbReference>
<dbReference type="PIR" id="S00943">
    <property type="entry name" value="S00943"/>
</dbReference>
<dbReference type="SMR" id="P05465"/>
<dbReference type="STRING" id="471.BUM88_16395"/>
<dbReference type="GO" id="GO:0030288">
    <property type="term" value="C:outer membrane-bounded periplasmic space"/>
    <property type="evidence" value="ECO:0007669"/>
    <property type="project" value="InterPro"/>
</dbReference>
<dbReference type="GO" id="GO:0005886">
    <property type="term" value="C:plasma membrane"/>
    <property type="evidence" value="ECO:0007669"/>
    <property type="project" value="UniProtKB-SubCell"/>
</dbReference>
<dbReference type="GO" id="GO:0048038">
    <property type="term" value="F:quinone binding"/>
    <property type="evidence" value="ECO:0007669"/>
    <property type="project" value="InterPro"/>
</dbReference>
<dbReference type="GO" id="GO:0008876">
    <property type="term" value="F:quinoprotein glucose dehydrogenase activity"/>
    <property type="evidence" value="ECO:0007669"/>
    <property type="project" value="TreeGrafter"/>
</dbReference>
<dbReference type="CDD" id="cd10280">
    <property type="entry name" value="PQQ_mGDH"/>
    <property type="match status" value="1"/>
</dbReference>
<dbReference type="Gene3D" id="2.140.10.10">
    <property type="entry name" value="Quinoprotein alcohol dehydrogenase-like superfamily"/>
    <property type="match status" value="2"/>
</dbReference>
<dbReference type="InterPro" id="IPR018391">
    <property type="entry name" value="PQQ_b-propeller_rpt"/>
</dbReference>
<dbReference type="InterPro" id="IPR017511">
    <property type="entry name" value="PQQ_mDH"/>
</dbReference>
<dbReference type="InterPro" id="IPR002372">
    <property type="entry name" value="PQQ_rpt_dom"/>
</dbReference>
<dbReference type="InterPro" id="IPR011047">
    <property type="entry name" value="Quinoprotein_ADH-like_sf"/>
</dbReference>
<dbReference type="InterPro" id="IPR001479">
    <property type="entry name" value="Quinoprotein_DH_CS"/>
</dbReference>
<dbReference type="NCBIfam" id="TIGR03074">
    <property type="entry name" value="PQQ_membr_DH"/>
    <property type="match status" value="1"/>
</dbReference>
<dbReference type="PANTHER" id="PTHR32303">
    <property type="entry name" value="QUINOPROTEIN ALCOHOL DEHYDROGENASE (CYTOCHROME C)"/>
    <property type="match status" value="1"/>
</dbReference>
<dbReference type="PANTHER" id="PTHR32303:SF4">
    <property type="entry name" value="QUINOPROTEIN GLUCOSE DEHYDROGENASE"/>
    <property type="match status" value="1"/>
</dbReference>
<dbReference type="Pfam" id="PF01011">
    <property type="entry name" value="PQQ"/>
    <property type="match status" value="1"/>
</dbReference>
<dbReference type="SMART" id="SM00564">
    <property type="entry name" value="PQQ"/>
    <property type="match status" value="5"/>
</dbReference>
<dbReference type="SUPFAM" id="SSF50998">
    <property type="entry name" value="Quinoprotein alcohol dehydrogenase-like"/>
    <property type="match status" value="1"/>
</dbReference>
<dbReference type="PROSITE" id="PS00363">
    <property type="entry name" value="BACTERIAL_PQQ_1"/>
    <property type="match status" value="1"/>
</dbReference>
<dbReference type="PROSITE" id="PS00364">
    <property type="entry name" value="BACTERIAL_PQQ_2"/>
    <property type="match status" value="1"/>
</dbReference>
<protein>
    <recommendedName>
        <fullName>Quinoprotein glucose dehydrogenase A</fullName>
        <ecNumber>1.1.99.35</ecNumber>
    </recommendedName>
    <alternativeName>
        <fullName>GDH-A</fullName>
    </alternativeName>
    <alternativeName>
        <fullName>Glucose dehydrogenase A [pyrroloquinoline-quinone]</fullName>
    </alternativeName>
    <alternativeName>
        <fullName>Quinoprotein glucose DH</fullName>
    </alternativeName>
</protein>
<keyword id="KW-0997">Cell inner membrane</keyword>
<keyword id="KW-1003">Cell membrane</keyword>
<keyword id="KW-0472">Membrane</keyword>
<keyword id="KW-0560">Oxidoreductase</keyword>
<keyword id="KW-0634">PQQ</keyword>
<keyword id="KW-0732">Signal</keyword>
<keyword id="KW-0812">Transmembrane</keyword>
<keyword id="KW-1133">Transmembrane helix</keyword>
<gene>
    <name type="primary">gdhA</name>
</gene>